<sequence>MKTKLKVGDNVKILCGKDRGKTGEVVSIDRKNLKVIVKSCNMVKKVVKARTPQEKSKIIDKEAPIDISNVMLFSSGIASRIGFKFENNEKKRYLKKNGENV</sequence>
<accession>A1QZS5</accession>
<name>RL24_BORT9</name>
<evidence type="ECO:0000255" key="1">
    <source>
        <dbReference type="HAMAP-Rule" id="MF_01326"/>
    </source>
</evidence>
<evidence type="ECO:0000305" key="2"/>
<protein>
    <recommendedName>
        <fullName evidence="1">Large ribosomal subunit protein uL24</fullName>
    </recommendedName>
    <alternativeName>
        <fullName evidence="2">50S ribosomal protein L24</fullName>
    </alternativeName>
</protein>
<reference key="1">
    <citation type="submission" date="2004-12" db="EMBL/GenBank/DDBJ databases">
        <title>The genome sequence of Borrelia hermsii and Borrelia turicatae: comparative analysis of two agents of endemic N. America relapsing fever.</title>
        <authorList>
            <person name="Porcella S.F."/>
            <person name="Raffel S.J."/>
            <person name="Schrumpf M.E."/>
            <person name="Montgomery B."/>
            <person name="Smith T."/>
            <person name="Schwan T.G."/>
        </authorList>
    </citation>
    <scope>NUCLEOTIDE SEQUENCE [LARGE SCALE GENOMIC DNA]</scope>
    <source>
        <strain>91E135</strain>
    </source>
</reference>
<dbReference type="EMBL" id="CP000049">
    <property type="protein sequence ID" value="AAX17817.1"/>
    <property type="molecule type" value="Genomic_DNA"/>
</dbReference>
<dbReference type="RefSeq" id="WP_011772436.1">
    <property type="nucleotide sequence ID" value="NZ_CP073176.1"/>
</dbReference>
<dbReference type="SMR" id="A1QZS5"/>
<dbReference type="KEGG" id="btu:BT0489"/>
<dbReference type="eggNOG" id="COG0198">
    <property type="taxonomic scope" value="Bacteria"/>
</dbReference>
<dbReference type="HOGENOM" id="CLU_093315_2_3_12"/>
<dbReference type="Proteomes" id="UP000001205">
    <property type="component" value="Chromosome"/>
</dbReference>
<dbReference type="GO" id="GO:1990904">
    <property type="term" value="C:ribonucleoprotein complex"/>
    <property type="evidence" value="ECO:0007669"/>
    <property type="project" value="UniProtKB-KW"/>
</dbReference>
<dbReference type="GO" id="GO:0005840">
    <property type="term" value="C:ribosome"/>
    <property type="evidence" value="ECO:0007669"/>
    <property type="project" value="UniProtKB-KW"/>
</dbReference>
<dbReference type="GO" id="GO:0019843">
    <property type="term" value="F:rRNA binding"/>
    <property type="evidence" value="ECO:0007669"/>
    <property type="project" value="UniProtKB-UniRule"/>
</dbReference>
<dbReference type="GO" id="GO:0003735">
    <property type="term" value="F:structural constituent of ribosome"/>
    <property type="evidence" value="ECO:0007669"/>
    <property type="project" value="InterPro"/>
</dbReference>
<dbReference type="GO" id="GO:0006412">
    <property type="term" value="P:translation"/>
    <property type="evidence" value="ECO:0007669"/>
    <property type="project" value="UniProtKB-UniRule"/>
</dbReference>
<dbReference type="CDD" id="cd06089">
    <property type="entry name" value="KOW_RPL26"/>
    <property type="match status" value="1"/>
</dbReference>
<dbReference type="Gene3D" id="2.30.30.30">
    <property type="match status" value="1"/>
</dbReference>
<dbReference type="HAMAP" id="MF_01326_B">
    <property type="entry name" value="Ribosomal_uL24_B"/>
    <property type="match status" value="1"/>
</dbReference>
<dbReference type="InterPro" id="IPR005824">
    <property type="entry name" value="KOW"/>
</dbReference>
<dbReference type="InterPro" id="IPR014722">
    <property type="entry name" value="Rib_uL2_dom2"/>
</dbReference>
<dbReference type="InterPro" id="IPR003256">
    <property type="entry name" value="Ribosomal_uL24"/>
</dbReference>
<dbReference type="InterPro" id="IPR005825">
    <property type="entry name" value="Ribosomal_uL24_CS"/>
</dbReference>
<dbReference type="InterPro" id="IPR041988">
    <property type="entry name" value="Ribosomal_uL24_KOW"/>
</dbReference>
<dbReference type="InterPro" id="IPR008991">
    <property type="entry name" value="Translation_prot_SH3-like_sf"/>
</dbReference>
<dbReference type="NCBIfam" id="TIGR01079">
    <property type="entry name" value="rplX_bact"/>
    <property type="match status" value="1"/>
</dbReference>
<dbReference type="PANTHER" id="PTHR12903">
    <property type="entry name" value="MITOCHONDRIAL RIBOSOMAL PROTEIN L24"/>
    <property type="match status" value="1"/>
</dbReference>
<dbReference type="Pfam" id="PF00467">
    <property type="entry name" value="KOW"/>
    <property type="match status" value="1"/>
</dbReference>
<dbReference type="Pfam" id="PF17136">
    <property type="entry name" value="ribosomal_L24"/>
    <property type="match status" value="1"/>
</dbReference>
<dbReference type="SMART" id="SM00739">
    <property type="entry name" value="KOW"/>
    <property type="match status" value="1"/>
</dbReference>
<dbReference type="SUPFAM" id="SSF50104">
    <property type="entry name" value="Translation proteins SH3-like domain"/>
    <property type="match status" value="1"/>
</dbReference>
<dbReference type="PROSITE" id="PS01108">
    <property type="entry name" value="RIBOSOMAL_L24"/>
    <property type="match status" value="1"/>
</dbReference>
<proteinExistence type="inferred from homology"/>
<keyword id="KW-1185">Reference proteome</keyword>
<keyword id="KW-0687">Ribonucleoprotein</keyword>
<keyword id="KW-0689">Ribosomal protein</keyword>
<keyword id="KW-0694">RNA-binding</keyword>
<keyword id="KW-0699">rRNA-binding</keyword>
<organism>
    <name type="scientific">Borrelia turicatae (strain 91E135)</name>
    <dbReference type="NCBI Taxonomy" id="314724"/>
    <lineage>
        <taxon>Bacteria</taxon>
        <taxon>Pseudomonadati</taxon>
        <taxon>Spirochaetota</taxon>
        <taxon>Spirochaetia</taxon>
        <taxon>Spirochaetales</taxon>
        <taxon>Borreliaceae</taxon>
        <taxon>Borrelia</taxon>
    </lineage>
</organism>
<gene>
    <name evidence="1" type="primary">rplX</name>
    <name type="ordered locus">BT0489</name>
</gene>
<comment type="function">
    <text evidence="1">One of two assembly initiator proteins, it binds directly to the 5'-end of the 23S rRNA, where it nucleates assembly of the 50S subunit.</text>
</comment>
<comment type="function">
    <text evidence="1">One of the proteins that surrounds the polypeptide exit tunnel on the outside of the subunit.</text>
</comment>
<comment type="subunit">
    <text evidence="1">Part of the 50S ribosomal subunit.</text>
</comment>
<comment type="similarity">
    <text evidence="1">Belongs to the universal ribosomal protein uL24 family.</text>
</comment>
<feature type="chain" id="PRO_1000165929" description="Large ribosomal subunit protein uL24">
    <location>
        <begin position="1"/>
        <end position="101"/>
    </location>
</feature>